<keyword id="KW-0143">Chaperone</keyword>
<keyword id="KW-0963">Cytoplasm</keyword>
<keyword id="KW-1185">Reference proteome</keyword>
<protein>
    <recommendedName>
        <fullName evidence="1">Co-chaperonin GroES</fullName>
    </recommendedName>
    <alternativeName>
        <fullName evidence="1">10 kDa chaperonin</fullName>
    </alternativeName>
    <alternativeName>
        <fullName evidence="1">Chaperonin-10</fullName>
        <shortName evidence="1">Cpn10</shortName>
    </alternativeName>
</protein>
<feature type="chain" id="PRO_1000082386" description="Co-chaperonin GroES">
    <location>
        <begin position="1"/>
        <end position="96"/>
    </location>
</feature>
<evidence type="ECO:0000255" key="1">
    <source>
        <dbReference type="HAMAP-Rule" id="MF_00580"/>
    </source>
</evidence>
<accession>A4SZV5</accession>
<name>CH10_POLAQ</name>
<sequence length="96" mass="10477">MNLRPLHDRVIIKRLDQESKTASGIIIPDAAAEKPDQGEILAVGPGKRDEAGKLNPLDVKVGDRVLFGKYAGQTVKVDGDELIVMREDDIMAVVQK</sequence>
<gene>
    <name evidence="1" type="primary">groES</name>
    <name evidence="1" type="synonym">groS</name>
    <name type="ordered locus">Pnuc_1806</name>
</gene>
<organism>
    <name type="scientific">Polynucleobacter asymbioticus (strain DSM 18221 / CIP 109841 / QLW-P1DMWA-1)</name>
    <name type="common">Polynucleobacter necessarius subsp. asymbioticus</name>
    <dbReference type="NCBI Taxonomy" id="312153"/>
    <lineage>
        <taxon>Bacteria</taxon>
        <taxon>Pseudomonadati</taxon>
        <taxon>Pseudomonadota</taxon>
        <taxon>Betaproteobacteria</taxon>
        <taxon>Burkholderiales</taxon>
        <taxon>Burkholderiaceae</taxon>
        <taxon>Polynucleobacter</taxon>
    </lineage>
</organism>
<proteinExistence type="inferred from homology"/>
<reference key="1">
    <citation type="journal article" date="2012" name="Stand. Genomic Sci.">
        <title>Complete genome sequence of Polynucleobacter necessarius subsp. asymbioticus type strain (QLW-P1DMWA-1(T)).</title>
        <authorList>
            <person name="Meincke L."/>
            <person name="Copeland A."/>
            <person name="Lapidus A."/>
            <person name="Lucas S."/>
            <person name="Berry K.W."/>
            <person name="Del Rio T.G."/>
            <person name="Hammon N."/>
            <person name="Dalin E."/>
            <person name="Tice H."/>
            <person name="Pitluck S."/>
            <person name="Richardson P."/>
            <person name="Bruce D."/>
            <person name="Goodwin L."/>
            <person name="Han C."/>
            <person name="Tapia R."/>
            <person name="Detter J.C."/>
            <person name="Schmutz J."/>
            <person name="Brettin T."/>
            <person name="Larimer F."/>
            <person name="Land M."/>
            <person name="Hauser L."/>
            <person name="Kyrpides N.C."/>
            <person name="Ivanova N."/>
            <person name="Goker M."/>
            <person name="Woyke T."/>
            <person name="Wu Q.L."/>
            <person name="Pockl M."/>
            <person name="Hahn M.W."/>
            <person name="Klenk H.P."/>
        </authorList>
    </citation>
    <scope>NUCLEOTIDE SEQUENCE [LARGE SCALE GENOMIC DNA]</scope>
    <source>
        <strain>DSM 18221 / CIP 109841 / QLW-P1DMWA-1</strain>
    </source>
</reference>
<dbReference type="EMBL" id="CP000655">
    <property type="protein sequence ID" value="ABP35019.1"/>
    <property type="molecule type" value="Genomic_DNA"/>
</dbReference>
<dbReference type="RefSeq" id="WP_011903642.1">
    <property type="nucleotide sequence ID" value="NC_009379.1"/>
</dbReference>
<dbReference type="SMR" id="A4SZV5"/>
<dbReference type="GeneID" id="31482195"/>
<dbReference type="KEGG" id="pnu:Pnuc_1806"/>
<dbReference type="eggNOG" id="COG0234">
    <property type="taxonomic scope" value="Bacteria"/>
</dbReference>
<dbReference type="HOGENOM" id="CLU_132825_1_0_4"/>
<dbReference type="Proteomes" id="UP000000231">
    <property type="component" value="Chromosome"/>
</dbReference>
<dbReference type="GO" id="GO:0005737">
    <property type="term" value="C:cytoplasm"/>
    <property type="evidence" value="ECO:0007669"/>
    <property type="project" value="UniProtKB-SubCell"/>
</dbReference>
<dbReference type="GO" id="GO:0005524">
    <property type="term" value="F:ATP binding"/>
    <property type="evidence" value="ECO:0007669"/>
    <property type="project" value="InterPro"/>
</dbReference>
<dbReference type="GO" id="GO:0046872">
    <property type="term" value="F:metal ion binding"/>
    <property type="evidence" value="ECO:0007669"/>
    <property type="project" value="TreeGrafter"/>
</dbReference>
<dbReference type="GO" id="GO:0044183">
    <property type="term" value="F:protein folding chaperone"/>
    <property type="evidence" value="ECO:0007669"/>
    <property type="project" value="InterPro"/>
</dbReference>
<dbReference type="GO" id="GO:0051087">
    <property type="term" value="F:protein-folding chaperone binding"/>
    <property type="evidence" value="ECO:0007669"/>
    <property type="project" value="TreeGrafter"/>
</dbReference>
<dbReference type="GO" id="GO:0051082">
    <property type="term" value="F:unfolded protein binding"/>
    <property type="evidence" value="ECO:0007669"/>
    <property type="project" value="TreeGrafter"/>
</dbReference>
<dbReference type="GO" id="GO:0051085">
    <property type="term" value="P:chaperone cofactor-dependent protein refolding"/>
    <property type="evidence" value="ECO:0007669"/>
    <property type="project" value="TreeGrafter"/>
</dbReference>
<dbReference type="CDD" id="cd00320">
    <property type="entry name" value="cpn10"/>
    <property type="match status" value="1"/>
</dbReference>
<dbReference type="FunFam" id="2.30.33.40:FF:000001">
    <property type="entry name" value="10 kDa chaperonin"/>
    <property type="match status" value="1"/>
</dbReference>
<dbReference type="Gene3D" id="2.30.33.40">
    <property type="entry name" value="GroES chaperonin"/>
    <property type="match status" value="1"/>
</dbReference>
<dbReference type="HAMAP" id="MF_00580">
    <property type="entry name" value="CH10"/>
    <property type="match status" value="1"/>
</dbReference>
<dbReference type="InterPro" id="IPR020818">
    <property type="entry name" value="Chaperonin_GroES"/>
</dbReference>
<dbReference type="InterPro" id="IPR037124">
    <property type="entry name" value="Chaperonin_GroES_sf"/>
</dbReference>
<dbReference type="InterPro" id="IPR018369">
    <property type="entry name" value="Chaprnonin_Cpn10_CS"/>
</dbReference>
<dbReference type="InterPro" id="IPR011032">
    <property type="entry name" value="GroES-like_sf"/>
</dbReference>
<dbReference type="NCBIfam" id="NF001527">
    <property type="entry name" value="PRK00364.1-2"/>
    <property type="match status" value="1"/>
</dbReference>
<dbReference type="NCBIfam" id="NF001529">
    <property type="entry name" value="PRK00364.1-5"/>
    <property type="match status" value="1"/>
</dbReference>
<dbReference type="NCBIfam" id="NF001531">
    <property type="entry name" value="PRK00364.2-2"/>
    <property type="match status" value="1"/>
</dbReference>
<dbReference type="NCBIfam" id="NF001533">
    <property type="entry name" value="PRK00364.2-4"/>
    <property type="match status" value="1"/>
</dbReference>
<dbReference type="PANTHER" id="PTHR10772">
    <property type="entry name" value="10 KDA HEAT SHOCK PROTEIN"/>
    <property type="match status" value="1"/>
</dbReference>
<dbReference type="PANTHER" id="PTHR10772:SF58">
    <property type="entry name" value="CO-CHAPERONIN GROES"/>
    <property type="match status" value="1"/>
</dbReference>
<dbReference type="Pfam" id="PF00166">
    <property type="entry name" value="Cpn10"/>
    <property type="match status" value="1"/>
</dbReference>
<dbReference type="PRINTS" id="PR00297">
    <property type="entry name" value="CHAPERONIN10"/>
</dbReference>
<dbReference type="SMART" id="SM00883">
    <property type="entry name" value="Cpn10"/>
    <property type="match status" value="1"/>
</dbReference>
<dbReference type="SUPFAM" id="SSF50129">
    <property type="entry name" value="GroES-like"/>
    <property type="match status" value="1"/>
</dbReference>
<dbReference type="PROSITE" id="PS00681">
    <property type="entry name" value="CHAPERONINS_CPN10"/>
    <property type="match status" value="1"/>
</dbReference>
<comment type="function">
    <text evidence="1">Together with the chaperonin GroEL, plays an essential role in assisting protein folding. The GroEL-GroES system forms a nano-cage that allows encapsulation of the non-native substrate proteins and provides a physical environment optimized to promote and accelerate protein folding. GroES binds to the apical surface of the GroEL ring, thereby capping the opening of the GroEL channel.</text>
</comment>
<comment type="subunit">
    <text evidence="1">Heptamer of 7 subunits arranged in a ring. Interacts with the chaperonin GroEL.</text>
</comment>
<comment type="subcellular location">
    <subcellularLocation>
        <location evidence="1">Cytoplasm</location>
    </subcellularLocation>
</comment>
<comment type="similarity">
    <text evidence="1">Belongs to the GroES chaperonin family.</text>
</comment>